<dbReference type="EC" id="2.1.1.223" evidence="1"/>
<dbReference type="EMBL" id="CP000880">
    <property type="protein sequence ID" value="ABX20223.1"/>
    <property type="status" value="ALT_INIT"/>
    <property type="molecule type" value="Genomic_DNA"/>
</dbReference>
<dbReference type="SMR" id="A9MGW2"/>
<dbReference type="STRING" id="41514.SARI_00281"/>
<dbReference type="KEGG" id="ses:SARI_00281"/>
<dbReference type="HOGENOM" id="CLU_061983_0_0_6"/>
<dbReference type="Proteomes" id="UP000002084">
    <property type="component" value="Chromosome"/>
</dbReference>
<dbReference type="GO" id="GO:0005737">
    <property type="term" value="C:cytoplasm"/>
    <property type="evidence" value="ECO:0007669"/>
    <property type="project" value="UniProtKB-SubCell"/>
</dbReference>
<dbReference type="GO" id="GO:0003676">
    <property type="term" value="F:nucleic acid binding"/>
    <property type="evidence" value="ECO:0007669"/>
    <property type="project" value="InterPro"/>
</dbReference>
<dbReference type="GO" id="GO:0016430">
    <property type="term" value="F:tRNA (adenine-N6)-methyltransferase activity"/>
    <property type="evidence" value="ECO:0007669"/>
    <property type="project" value="UniProtKB-UniRule"/>
</dbReference>
<dbReference type="GO" id="GO:0032259">
    <property type="term" value="P:methylation"/>
    <property type="evidence" value="ECO:0007669"/>
    <property type="project" value="UniProtKB-KW"/>
</dbReference>
<dbReference type="GO" id="GO:0008033">
    <property type="term" value="P:tRNA processing"/>
    <property type="evidence" value="ECO:0007669"/>
    <property type="project" value="UniProtKB-UniRule"/>
</dbReference>
<dbReference type="CDD" id="cd02440">
    <property type="entry name" value="AdoMet_MTases"/>
    <property type="match status" value="1"/>
</dbReference>
<dbReference type="Gene3D" id="3.40.50.150">
    <property type="entry name" value="Vaccinia Virus protein VP39"/>
    <property type="match status" value="1"/>
</dbReference>
<dbReference type="HAMAP" id="MF_01872">
    <property type="entry name" value="tRNA_methyltr_YfiC"/>
    <property type="match status" value="1"/>
</dbReference>
<dbReference type="InterPro" id="IPR002052">
    <property type="entry name" value="DNA_methylase_N6_adenine_CS"/>
</dbReference>
<dbReference type="InterPro" id="IPR029063">
    <property type="entry name" value="SAM-dependent_MTases_sf"/>
</dbReference>
<dbReference type="InterPro" id="IPR007848">
    <property type="entry name" value="Small_mtfrase_dom"/>
</dbReference>
<dbReference type="InterPro" id="IPR050210">
    <property type="entry name" value="tRNA_Adenine-N(6)_MTase"/>
</dbReference>
<dbReference type="InterPro" id="IPR022882">
    <property type="entry name" value="tRNA_adenine-N6_MeTrfase"/>
</dbReference>
<dbReference type="NCBIfam" id="NF047853">
    <property type="entry name" value="tRm6a37MtseTrmN"/>
    <property type="match status" value="1"/>
</dbReference>
<dbReference type="PANTHER" id="PTHR47739">
    <property type="entry name" value="TRNA1(VAL) (ADENINE(37)-N6)-METHYLTRANSFERASE"/>
    <property type="match status" value="1"/>
</dbReference>
<dbReference type="PANTHER" id="PTHR47739:SF1">
    <property type="entry name" value="TRNA1(VAL) (ADENINE(37)-N6)-METHYLTRANSFERASE"/>
    <property type="match status" value="1"/>
</dbReference>
<dbReference type="Pfam" id="PF05175">
    <property type="entry name" value="MTS"/>
    <property type="match status" value="1"/>
</dbReference>
<dbReference type="SUPFAM" id="SSF53335">
    <property type="entry name" value="S-adenosyl-L-methionine-dependent methyltransferases"/>
    <property type="match status" value="1"/>
</dbReference>
<dbReference type="PROSITE" id="PS00092">
    <property type="entry name" value="N6_MTASE"/>
    <property type="match status" value="1"/>
</dbReference>
<gene>
    <name evidence="1" type="primary">yfiC</name>
    <name type="ordered locus">SARI_00281</name>
</gene>
<proteinExistence type="inferred from homology"/>
<comment type="function">
    <text evidence="1">Specifically methylates the adenine in position 37 of tRNA(1)(Val) (anticodon cmo5UAC).</text>
</comment>
<comment type="catalytic activity">
    <reaction evidence="1">
        <text>adenosine(37) in tRNA1(Val) + S-adenosyl-L-methionine = N(6)-methyladenosine(37) in tRNA1(Val) + S-adenosyl-L-homocysteine + H(+)</text>
        <dbReference type="Rhea" id="RHEA:43160"/>
        <dbReference type="Rhea" id="RHEA-COMP:10369"/>
        <dbReference type="Rhea" id="RHEA-COMP:10370"/>
        <dbReference type="ChEBI" id="CHEBI:15378"/>
        <dbReference type="ChEBI" id="CHEBI:57856"/>
        <dbReference type="ChEBI" id="CHEBI:59789"/>
        <dbReference type="ChEBI" id="CHEBI:74411"/>
        <dbReference type="ChEBI" id="CHEBI:74449"/>
        <dbReference type="EC" id="2.1.1.223"/>
    </reaction>
</comment>
<comment type="subcellular location">
    <subcellularLocation>
        <location evidence="1">Cytoplasm</location>
    </subcellularLocation>
</comment>
<comment type="similarity">
    <text evidence="1">Belongs to the methyltransferase superfamily. tRNA (adenine-N(6)-)-methyltransferase family.</text>
</comment>
<comment type="sequence caution" evidence="2">
    <conflict type="erroneous initiation">
        <sequence resource="EMBL-CDS" id="ABX20223"/>
    </conflict>
</comment>
<feature type="chain" id="PRO_0000387403" description="tRNA1(Val) (adenine(37)-N6)-methyltransferase">
    <location>
        <begin position="1"/>
        <end position="245"/>
    </location>
</feature>
<organism>
    <name type="scientific">Salmonella arizonae (strain ATCC BAA-731 / CDC346-86 / RSK2980)</name>
    <dbReference type="NCBI Taxonomy" id="41514"/>
    <lineage>
        <taxon>Bacteria</taxon>
        <taxon>Pseudomonadati</taxon>
        <taxon>Pseudomonadota</taxon>
        <taxon>Gammaproteobacteria</taxon>
        <taxon>Enterobacterales</taxon>
        <taxon>Enterobacteriaceae</taxon>
        <taxon>Salmonella</taxon>
    </lineage>
</organism>
<sequence length="245" mass="27297">MSHSGSVLRRNGFTFKQFFVAHDRCAMKVGTDGILLGAWAPVADVKRILDIGTGSGLLALMLAQRTDDNVPVDAVELDAEAAMQAQENVAHSPWAHRITVHTDDIQRWAPRQTVRFDLIISNPPYYEPGVECATPQREQARYTATLDHQTLLAIAADCITEDGFLCVVLPEQIGNAFTQQALSMGWHLRLRTDVAENEARLPHRVLLAFSPQAGECFSDRLVIRGPDQHYSESYTALTQAFYLFM</sequence>
<evidence type="ECO:0000255" key="1">
    <source>
        <dbReference type="HAMAP-Rule" id="MF_01872"/>
    </source>
</evidence>
<evidence type="ECO:0000305" key="2"/>
<reference key="1">
    <citation type="submission" date="2007-11" db="EMBL/GenBank/DDBJ databases">
        <authorList>
            <consortium name="The Salmonella enterica serovar Arizonae Genome Sequencing Project"/>
            <person name="McClelland M."/>
            <person name="Sanderson E.K."/>
            <person name="Porwollik S."/>
            <person name="Spieth J."/>
            <person name="Clifton W.S."/>
            <person name="Fulton R."/>
            <person name="Chunyan W."/>
            <person name="Wollam A."/>
            <person name="Shah N."/>
            <person name="Pepin K."/>
            <person name="Bhonagiri V."/>
            <person name="Nash W."/>
            <person name="Johnson M."/>
            <person name="Thiruvilangam P."/>
            <person name="Wilson R."/>
        </authorList>
    </citation>
    <scope>NUCLEOTIDE SEQUENCE [LARGE SCALE GENOMIC DNA]</scope>
    <source>
        <strain>ATCC BAA-731 / CDC346-86 / RSK2980</strain>
    </source>
</reference>
<keyword id="KW-0963">Cytoplasm</keyword>
<keyword id="KW-0489">Methyltransferase</keyword>
<keyword id="KW-1185">Reference proteome</keyword>
<keyword id="KW-0949">S-adenosyl-L-methionine</keyword>
<keyword id="KW-0808">Transferase</keyword>
<keyword id="KW-0819">tRNA processing</keyword>
<accession>A9MGW2</accession>
<name>TRMN6_SALAR</name>
<protein>
    <recommendedName>
        <fullName evidence="1">tRNA1(Val) (adenine(37)-N6)-methyltransferase</fullName>
        <ecNumber evidence="1">2.1.1.223</ecNumber>
    </recommendedName>
    <alternativeName>
        <fullName evidence="1">tRNA m6A37 methyltransferase</fullName>
    </alternativeName>
</protein>